<feature type="chain" id="PRO_0000290242" description="Beta-(1--&gt;2)glucan export ATP-binding/permease protein NdvA">
    <location>
        <begin position="1"/>
        <end position="595"/>
    </location>
</feature>
<feature type="transmembrane region" description="Helical" evidence="2">
    <location>
        <begin position="22"/>
        <end position="42"/>
    </location>
</feature>
<feature type="transmembrane region" description="Helical" evidence="2">
    <location>
        <begin position="55"/>
        <end position="75"/>
    </location>
</feature>
<feature type="transmembrane region" description="Helical" evidence="2">
    <location>
        <begin position="128"/>
        <end position="148"/>
    </location>
</feature>
<feature type="transmembrane region" description="Helical" evidence="2">
    <location>
        <begin position="152"/>
        <end position="172"/>
    </location>
</feature>
<feature type="transmembrane region" description="Helical" evidence="2">
    <location>
        <begin position="248"/>
        <end position="268"/>
    </location>
</feature>
<feature type="domain" description="ABC transmembrane type-1" evidence="2">
    <location>
        <begin position="21"/>
        <end position="301"/>
    </location>
</feature>
<feature type="domain" description="ABC transporter" evidence="2">
    <location>
        <begin position="335"/>
        <end position="569"/>
    </location>
</feature>
<feature type="binding site" evidence="2">
    <location>
        <begin position="368"/>
        <end position="375"/>
    </location>
    <ligand>
        <name>ATP</name>
        <dbReference type="ChEBI" id="CHEBI:30616"/>
    </ligand>
</feature>
<reference key="1">
    <citation type="journal article" date="2004" name="Proc. Natl. Acad. Sci. U.S.A.">
        <title>The louse-borne human pathogen Bartonella quintana is a genomic derivative of the zoonotic agent Bartonella henselae.</title>
        <authorList>
            <person name="Alsmark U.C.M."/>
            <person name="Frank A.C."/>
            <person name="Karlberg E.O."/>
            <person name="Legault B.-A."/>
            <person name="Ardell D.H."/>
            <person name="Canbaeck B."/>
            <person name="Eriksson A.-S."/>
            <person name="Naeslund A.K."/>
            <person name="Handley S.A."/>
            <person name="Huvet M."/>
            <person name="La Scola B."/>
            <person name="Holmberg M."/>
            <person name="Andersson S.G.E."/>
        </authorList>
    </citation>
    <scope>NUCLEOTIDE SEQUENCE [LARGE SCALE GENOMIC DNA]</scope>
    <source>
        <strain>Toulouse</strain>
    </source>
</reference>
<protein>
    <recommendedName>
        <fullName evidence="2">Beta-(1--&gt;2)glucan export ATP-binding/permease protein NdvA</fullName>
        <ecNumber evidence="2">7.5.2.3</ecNumber>
    </recommendedName>
</protein>
<name>NDVA_BARQU</name>
<dbReference type="EC" id="7.5.2.3" evidence="2"/>
<dbReference type="EMBL" id="BX897700">
    <property type="protein sequence ID" value="CAF26276.1"/>
    <property type="molecule type" value="Genomic_DNA"/>
</dbReference>
<dbReference type="SMR" id="Q6FZF2"/>
<dbReference type="KEGG" id="bqu:BQ07930"/>
<dbReference type="eggNOG" id="COG1132">
    <property type="taxonomic scope" value="Bacteria"/>
</dbReference>
<dbReference type="HOGENOM" id="CLU_000604_84_8_5"/>
<dbReference type="OrthoDB" id="9804259at2"/>
<dbReference type="Proteomes" id="UP000000597">
    <property type="component" value="Chromosome"/>
</dbReference>
<dbReference type="GO" id="GO:0005886">
    <property type="term" value="C:plasma membrane"/>
    <property type="evidence" value="ECO:0007669"/>
    <property type="project" value="UniProtKB-SubCell"/>
</dbReference>
<dbReference type="GO" id="GO:0015441">
    <property type="term" value="F:ABC-type beta-glucan transporter activity"/>
    <property type="evidence" value="ECO:0007669"/>
    <property type="project" value="UniProtKB-EC"/>
</dbReference>
<dbReference type="GO" id="GO:0015421">
    <property type="term" value="F:ABC-type oligopeptide transporter activity"/>
    <property type="evidence" value="ECO:0007669"/>
    <property type="project" value="TreeGrafter"/>
</dbReference>
<dbReference type="GO" id="GO:0005524">
    <property type="term" value="F:ATP binding"/>
    <property type="evidence" value="ECO:0007669"/>
    <property type="project" value="UniProtKB-KW"/>
</dbReference>
<dbReference type="GO" id="GO:0016887">
    <property type="term" value="F:ATP hydrolysis activity"/>
    <property type="evidence" value="ECO:0007669"/>
    <property type="project" value="InterPro"/>
</dbReference>
<dbReference type="CDD" id="cd18562">
    <property type="entry name" value="ABC_6TM_NdvA_beta-glucan_exporter_like"/>
    <property type="match status" value="1"/>
</dbReference>
<dbReference type="FunFam" id="3.40.50.300:FF:000221">
    <property type="entry name" value="Multidrug ABC transporter ATP-binding protein"/>
    <property type="match status" value="1"/>
</dbReference>
<dbReference type="Gene3D" id="1.20.1560.10">
    <property type="entry name" value="ABC transporter type 1, transmembrane domain"/>
    <property type="match status" value="1"/>
</dbReference>
<dbReference type="Gene3D" id="3.40.50.300">
    <property type="entry name" value="P-loop containing nucleotide triphosphate hydrolases"/>
    <property type="match status" value="1"/>
</dbReference>
<dbReference type="InterPro" id="IPR003593">
    <property type="entry name" value="AAA+_ATPase"/>
</dbReference>
<dbReference type="InterPro" id="IPR011527">
    <property type="entry name" value="ABC1_TM_dom"/>
</dbReference>
<dbReference type="InterPro" id="IPR036640">
    <property type="entry name" value="ABC1_TM_sf"/>
</dbReference>
<dbReference type="InterPro" id="IPR003439">
    <property type="entry name" value="ABC_transporter-like_ATP-bd"/>
</dbReference>
<dbReference type="InterPro" id="IPR017871">
    <property type="entry name" value="ABC_transporter-like_CS"/>
</dbReference>
<dbReference type="InterPro" id="IPR005896">
    <property type="entry name" value="NdvA"/>
</dbReference>
<dbReference type="InterPro" id="IPR027417">
    <property type="entry name" value="P-loop_NTPase"/>
</dbReference>
<dbReference type="InterPro" id="IPR039421">
    <property type="entry name" value="Type_1_exporter"/>
</dbReference>
<dbReference type="NCBIfam" id="TIGR01192">
    <property type="entry name" value="chvA"/>
    <property type="match status" value="1"/>
</dbReference>
<dbReference type="NCBIfam" id="NF010178">
    <property type="entry name" value="PRK13657.1"/>
    <property type="match status" value="1"/>
</dbReference>
<dbReference type="PANTHER" id="PTHR43394:SF1">
    <property type="entry name" value="ATP-BINDING CASSETTE SUB-FAMILY B MEMBER 10, MITOCHONDRIAL"/>
    <property type="match status" value="1"/>
</dbReference>
<dbReference type="PANTHER" id="PTHR43394">
    <property type="entry name" value="ATP-DEPENDENT PERMEASE MDL1, MITOCHONDRIAL"/>
    <property type="match status" value="1"/>
</dbReference>
<dbReference type="Pfam" id="PF00664">
    <property type="entry name" value="ABC_membrane"/>
    <property type="match status" value="1"/>
</dbReference>
<dbReference type="Pfam" id="PF00005">
    <property type="entry name" value="ABC_tran"/>
    <property type="match status" value="1"/>
</dbReference>
<dbReference type="SMART" id="SM00382">
    <property type="entry name" value="AAA"/>
    <property type="match status" value="1"/>
</dbReference>
<dbReference type="SUPFAM" id="SSF90123">
    <property type="entry name" value="ABC transporter transmembrane region"/>
    <property type="match status" value="1"/>
</dbReference>
<dbReference type="SUPFAM" id="SSF52540">
    <property type="entry name" value="P-loop containing nucleoside triphosphate hydrolases"/>
    <property type="match status" value="1"/>
</dbReference>
<dbReference type="PROSITE" id="PS50929">
    <property type="entry name" value="ABC_TM1F"/>
    <property type="match status" value="1"/>
</dbReference>
<dbReference type="PROSITE" id="PS00211">
    <property type="entry name" value="ABC_TRANSPORTER_1"/>
    <property type="match status" value="1"/>
</dbReference>
<dbReference type="PROSITE" id="PS50893">
    <property type="entry name" value="ABC_TRANSPORTER_2"/>
    <property type="match status" value="1"/>
</dbReference>
<dbReference type="PROSITE" id="PS51317">
    <property type="entry name" value="NDVA"/>
    <property type="match status" value="1"/>
</dbReference>
<gene>
    <name evidence="2" type="primary">ndvA</name>
    <name type="ordered locus">BQ07930</name>
</gene>
<comment type="function">
    <text evidence="1">Involved in beta-(1--&gt;2)glucan export. Transmembrane domains (TMD) form a pore in the inner membrane and the ATP-binding domain (NBD) is responsible for energy generation (By similarity).</text>
</comment>
<comment type="catalytic activity">
    <reaction evidence="2">
        <text>[(1-&gt;2)-beta-D-glucosyl](n)(in) + ATP + H2O = [(1-&gt;2)-beta-D-glucosyl](n)(out) + ADP + phosphate + H(+)</text>
        <dbReference type="Rhea" id="RHEA:18453"/>
        <dbReference type="Rhea" id="RHEA-COMP:11881"/>
        <dbReference type="ChEBI" id="CHEBI:15377"/>
        <dbReference type="ChEBI" id="CHEBI:15378"/>
        <dbReference type="ChEBI" id="CHEBI:27517"/>
        <dbReference type="ChEBI" id="CHEBI:30616"/>
        <dbReference type="ChEBI" id="CHEBI:43474"/>
        <dbReference type="ChEBI" id="CHEBI:456216"/>
        <dbReference type="EC" id="7.5.2.3"/>
    </reaction>
</comment>
<comment type="subunit">
    <text evidence="2">Homodimer.</text>
</comment>
<comment type="subcellular location">
    <subcellularLocation>
        <location evidence="2">Cell inner membrane</location>
        <topology evidence="2">Multi-pass membrane protein</topology>
    </subcellularLocation>
</comment>
<comment type="domain">
    <text>In NdvA the ATP-binding domain (NBD) and the transmembrane domain (TMD) are fused.</text>
</comment>
<comment type="similarity">
    <text evidence="2">Belongs to the ABC transporter superfamily. Beta-(1--&gt;2)glucan exporter (TC 3.A.1.108.1) family.</text>
</comment>
<keyword id="KW-0067">ATP-binding</keyword>
<keyword id="KW-0997">Cell inner membrane</keyword>
<keyword id="KW-1003">Cell membrane</keyword>
<keyword id="KW-0472">Membrane</keyword>
<keyword id="KW-0547">Nucleotide-binding</keyword>
<keyword id="KW-0762">Sugar transport</keyword>
<keyword id="KW-1278">Translocase</keyword>
<keyword id="KW-0812">Transmembrane</keyword>
<keyword id="KW-1133">Transmembrane helix</keyword>
<keyword id="KW-0813">Transport</keyword>
<evidence type="ECO:0000250" key="1"/>
<evidence type="ECO:0000255" key="2">
    <source>
        <dbReference type="HAMAP-Rule" id="MF_01728"/>
    </source>
</evidence>
<accession>Q6FZF2</accession>
<proteinExistence type="inferred from homology"/>
<sequence>MSLFKAYARVLTYLKKEKNTSLLICAANVMLAIITIAEPILFGRVIDSIAEKSAIILTLTIWVCFGISHIIAYVLVARSADRLTHRHRLAVLTESFERIIAMPLSWHQQRGTSNALHILLRAIDSMSAIWLDFMRQHLSTLVALFILIPIAFNMNWRLSIVLVVLAIIYVLIARLVMRKTKDGQAAVECYHHNLFQHVSDSISNVSIVQSYNRIREETSALHNYTNDLLKAQNPVLNWWALASGLNRTASTISIVCVLLLGAFFVAKGQLRVGEVVAFVGFAQLMISRLDQMSNFINLTVSSQAKLQEFFSMEDSTFHINEPENLPCLQNVKGTVQFHHVTYKFPNSSQGVFDISFKVKTGQTVAIVGPTGAGKTTLINLLQRVYEPTFGHISIDGINIRSINRESLRKSLATVFQDAGLFNRSIHDNILIGRATATNEELYEAAKIAAAHDFILKKTDRYNTMVGERGSQLSGGEKQRLAIARAVLKNAPILILDEATSALDVETEARVKDALDCISHNRTTFIIAHRLSTVRHADLVLFLENGHLIEKGNFQELIDKGGRFYKLLKAGGLIIDQPTIKGEDKNVIPLREAIAS</sequence>
<organism>
    <name type="scientific">Bartonella quintana (strain Toulouse)</name>
    <name type="common">Rochalimaea quintana</name>
    <dbReference type="NCBI Taxonomy" id="283165"/>
    <lineage>
        <taxon>Bacteria</taxon>
        <taxon>Pseudomonadati</taxon>
        <taxon>Pseudomonadota</taxon>
        <taxon>Alphaproteobacteria</taxon>
        <taxon>Hyphomicrobiales</taxon>
        <taxon>Bartonellaceae</taxon>
        <taxon>Bartonella</taxon>
    </lineage>
</organism>